<organism evidence="11">
    <name type="scientific">Vitis vinifera</name>
    <name type="common">Grape</name>
    <dbReference type="NCBI Taxonomy" id="29760"/>
    <lineage>
        <taxon>Eukaryota</taxon>
        <taxon>Viridiplantae</taxon>
        <taxon>Streptophyta</taxon>
        <taxon>Embryophyta</taxon>
        <taxon>Tracheophyta</taxon>
        <taxon>Spermatophyta</taxon>
        <taxon>Magnoliopsida</taxon>
        <taxon>eudicotyledons</taxon>
        <taxon>Gunneridae</taxon>
        <taxon>Pentapetalae</taxon>
        <taxon>rosids</taxon>
        <taxon>Vitales</taxon>
        <taxon>Vitaceae</taxon>
        <taxon>Viteae</taxon>
        <taxon>Vitis</taxon>
    </lineage>
</organism>
<comment type="function">
    <text evidence="3 4 6 7">Produces the terminal flavan-3-ol monomers required for the formation of proanthocyanidins or condensed tannins in leaves and flowers, as well as in the skin and seeds of developing berries (PubMed:16169968, Ref.1). Behaves as a reductase and as a C-3 epimerase (PubMed:20030585). Catalyzes the double reduction of anthocyanidins, producing a mixture of (2S,3S)- and (2S,3R)-flavan-3-ols (Ref.1). The enzyme catalyzes sequential hydride transfers to C-2 and C-4, respectively and epimerization at C-3 is achieved by tautomerization that occurs between the two hydride transfers (PubMed:20030585). Converts cyanidin, pelargonidin and delphinidin into catechin and epicatechin, afzelechin and epiafzelechin, and gallocatechin and epigallocatechin respectively (PubMed:19690377).</text>
</comment>
<comment type="catalytic activity">
    <reaction evidence="6 7">
        <text>a (2S,3R)-flavan-3-ol + 2 NADP(+) = an anthocyanidin with a 3-hydroxy group + 2 NADPH + 2 H(+)</text>
        <dbReference type="Rhea" id="RHEA:51416"/>
        <dbReference type="ChEBI" id="CHEBI:15378"/>
        <dbReference type="ChEBI" id="CHEBI:57783"/>
        <dbReference type="ChEBI" id="CHEBI:58349"/>
        <dbReference type="ChEBI" id="CHEBI:134087"/>
        <dbReference type="ChEBI" id="CHEBI:134088"/>
        <dbReference type="EC" id="1.3.1.112"/>
    </reaction>
</comment>
<comment type="catalytic activity">
    <reaction evidence="6 7">
        <text>a (2S,3S)-flavan-3-ol + 2 NADP(+) = an anthocyanidin with a 3-hydroxy group + 2 NADPH + 2 H(+)</text>
        <dbReference type="Rhea" id="RHEA:51420"/>
        <dbReference type="ChEBI" id="CHEBI:15378"/>
        <dbReference type="ChEBI" id="CHEBI:57783"/>
        <dbReference type="ChEBI" id="CHEBI:58349"/>
        <dbReference type="ChEBI" id="CHEBI:134087"/>
        <dbReference type="ChEBI" id="CHEBI:134089"/>
        <dbReference type="EC" id="1.3.1.112"/>
    </reaction>
</comment>
<comment type="activity regulation">
    <text evidence="4">Inhibited at NaCl concentrations higher than 200 mM.</text>
</comment>
<comment type="biophysicochemical properties">
    <kinetics>
        <KM evidence="5">2.82 uM for cyanidin (at pH 7.5 and 30 degrees Celsius)</KM>
    </kinetics>
</comment>
<comment type="pathway">
    <text evidence="9">Secondary metabolite biosynthesis; flavonoid biosynthesis.</text>
</comment>
<comment type="tissue specificity">
    <text evidence="3">Expressed in seeds, grape skins, flowers and leaves.</text>
</comment>
<comment type="developmental stage">
    <text evidence="7">Expressed at the early stage of berry development and then decreases toward the ripening stage (PubMed:16169968, Ref.1). Up-regulated after flowering (PubMed:16169968).</text>
</comment>
<comment type="miscellaneous">
    <text evidence="10">Hyperbolic binding of NADPH and NADP(+) to the free enzyme, with a single binding site each. The most likely enzymatic mechanism is sequential ordered Bi-Uni-Uni-Bi, with NADPH binding first and NADP(+) released last.</text>
</comment>
<comment type="miscellaneous">
    <text evidence="4">This enzyme is strictly pro-S stereospecific and the reaction mechanism involves two hydride transfers from two distinct NADPH molecules.</text>
</comment>
<comment type="similarity">
    <text evidence="9">Belongs to the NAD(P)-dependent epimerase/dehydratase family. Dihydroflavonol-4-reductase subfamily.</text>
</comment>
<sequence length="338" mass="36763">MATQHPIGKKTACVVGGTGFVASLLVKLLLQKGYAVNTTVRDPDNQKKVSHLLELQELGDLKIFRADLTDELSFEAPIAGCDFVFHVATPVHFASEDPENDMIKPAIQGVVNVMKACTRAKSVKRVILTSSAAAVTINQLDGTGLVVDEKNWTDIEFLTSAKPPTWGYPASKTLAEKAAWKFAEENNIDLITVIPTLMAGSSLTSDVPSSIGLAMSLITGNEFLINGMKGMQMLSGSVSIAHVEDVCRAHIFVAEKESASGRYICCAANTSVPELAKFLSKRYPQYKVPTDFGDFPPKSKLIISSEKLVKEGFSFKYGIEEIYDESVEYFKAKGLLQN</sequence>
<gene>
    <name evidence="8" type="primary">ANR</name>
</gene>
<accession>Q5FB34</accession>
<keyword id="KW-0002">3D-structure</keyword>
<keyword id="KW-0284">Flavonoid biosynthesis</keyword>
<keyword id="KW-0521">NADP</keyword>
<keyword id="KW-0560">Oxidoreductase</keyword>
<dbReference type="EC" id="1.3.1.112" evidence="6 7"/>
<dbReference type="EMBL" id="AB199315">
    <property type="protein sequence ID" value="BAD89742.1"/>
    <property type="molecule type" value="Genomic_DNA"/>
</dbReference>
<dbReference type="PDB" id="2RH8">
    <property type="method" value="X-ray"/>
    <property type="resolution" value="2.22 A"/>
    <property type="chains" value="A=1-338"/>
</dbReference>
<dbReference type="PDB" id="3HFS">
    <property type="method" value="X-ray"/>
    <property type="resolution" value="3.17 A"/>
    <property type="chains" value="A/B=1-338"/>
</dbReference>
<dbReference type="PDBsum" id="2RH8"/>
<dbReference type="PDBsum" id="3HFS"/>
<dbReference type="SMR" id="Q5FB34"/>
<dbReference type="BRENDA" id="1.3.1.112">
    <property type="organism ID" value="6671"/>
</dbReference>
<dbReference type="SABIO-RK" id="Q5FB34"/>
<dbReference type="UniPathway" id="UPA00154"/>
<dbReference type="EvolutionaryTrace" id="Q5FB34"/>
<dbReference type="ExpressionAtlas" id="Q5FB34">
    <property type="expression patterns" value="baseline and differential"/>
</dbReference>
<dbReference type="GO" id="GO:0033729">
    <property type="term" value="F:anthocyanidin reductase activity"/>
    <property type="evidence" value="ECO:0000314"/>
    <property type="project" value="UniProtKB"/>
</dbReference>
<dbReference type="GO" id="GO:0050661">
    <property type="term" value="F:NADP binding"/>
    <property type="evidence" value="ECO:0000314"/>
    <property type="project" value="UniProtKB"/>
</dbReference>
<dbReference type="GO" id="GO:0016854">
    <property type="term" value="F:racemase and epimerase activity"/>
    <property type="evidence" value="ECO:0000314"/>
    <property type="project" value="UniProtKB"/>
</dbReference>
<dbReference type="GO" id="GO:0009813">
    <property type="term" value="P:flavonoid biosynthetic process"/>
    <property type="evidence" value="ECO:0000314"/>
    <property type="project" value="UniProtKB"/>
</dbReference>
<dbReference type="CDD" id="cd05193">
    <property type="entry name" value="AR_like_SDR_e"/>
    <property type="match status" value="1"/>
</dbReference>
<dbReference type="FunFam" id="3.40.50.720:FF:000085">
    <property type="entry name" value="Dihydroflavonol reductase"/>
    <property type="match status" value="1"/>
</dbReference>
<dbReference type="Gene3D" id="3.40.50.720">
    <property type="entry name" value="NAD(P)-binding Rossmann-like Domain"/>
    <property type="match status" value="1"/>
</dbReference>
<dbReference type="InterPro" id="IPR001509">
    <property type="entry name" value="Epimerase_deHydtase"/>
</dbReference>
<dbReference type="InterPro" id="IPR036291">
    <property type="entry name" value="NAD(P)-bd_dom_sf"/>
</dbReference>
<dbReference type="InterPro" id="IPR050425">
    <property type="entry name" value="NAD(P)_dehydrat-like"/>
</dbReference>
<dbReference type="PANTHER" id="PTHR10366:SF288">
    <property type="entry name" value="ANTHOCYANIDIN REDUCTASE"/>
    <property type="match status" value="1"/>
</dbReference>
<dbReference type="PANTHER" id="PTHR10366">
    <property type="entry name" value="NAD DEPENDENT EPIMERASE/DEHYDRATASE"/>
    <property type="match status" value="1"/>
</dbReference>
<dbReference type="Pfam" id="PF01370">
    <property type="entry name" value="Epimerase"/>
    <property type="match status" value="1"/>
</dbReference>
<dbReference type="SUPFAM" id="SSF51735">
    <property type="entry name" value="NAD(P)-binding Rossmann-fold domains"/>
    <property type="match status" value="1"/>
</dbReference>
<reference key="1">
    <citation type="journal article" date="2005" name="Am. J. Enol. Vitic.">
        <title>Anthocyanidin reductase gene expression and accumulation of flavan-3-ols in grape berry.</title>
        <authorList>
            <person name="Fujita A."/>
            <person name="Soma N."/>
            <person name="Goto-Yamamoto N."/>
            <person name="Shindo H."/>
            <person name="Kakuta T."/>
            <person name="Koizumi T."/>
            <person name="Hashizume K."/>
        </authorList>
    </citation>
    <scope>NUCLEOTIDE SEQUENCE [GENOMIC DNA]</scope>
    <scope>DEVELOPMENTAL STAGE</scope>
    <scope>FUNCTION</scope>
    <scope>CATALYTIC ACTIVITY</scope>
    <source>
        <strain>cv. Cabernet Sauvignon</strain>
    </source>
</reference>
<reference key="2">
    <citation type="journal article" date="2005" name="Plant Physiol.">
        <title>Proanthocyanidin synthesis and expression of genes encoding leucoanthocyanidin reductase and anthocyanidin reductase in developing grape berries and grapevine leaves.</title>
        <authorList>
            <person name="Bogs J."/>
            <person name="Downey M.O."/>
            <person name="Harvey J.S."/>
            <person name="Ashton A.R."/>
            <person name="Tanner G.J."/>
            <person name="Robinson S.P."/>
        </authorList>
    </citation>
    <scope>FUNCTION</scope>
    <scope>DEVELOPMENTAL STAGE</scope>
    <scope>TISSUE SPECIFICITY</scope>
    <source>
        <strain>cv. Shiraz</strain>
    </source>
</reference>
<reference key="3">
    <citation type="journal article" date="2009" name="Arch. Biochem. Biophys.">
        <title>Binding-equilibrium and kinetic studies of anthocyanidin reductase from Vitis vinifera.</title>
        <authorList>
            <person name="Gargouri M."/>
            <person name="Gallois B."/>
            <person name="Chaudiere J."/>
        </authorList>
    </citation>
    <scope>BIOPHYSICOCHEMICAL PROPERTIES</scope>
    <source>
        <strain>cv. Cabernet Sauvignon</strain>
    </source>
</reference>
<reference key="4">
    <citation type="journal article" date="2010" name="Biol. Chem.">
        <title>The epimerase activity of anthocyanidin reductase from Vitis vinifera and its regiospecific hydride transfers.</title>
        <authorList>
            <person name="Gargouri M."/>
            <person name="Chaudiere J."/>
            <person name="Manigand C."/>
            <person name="Mauge C."/>
            <person name="Bathany K."/>
            <person name="Schmitter J.M."/>
            <person name="Gallois B."/>
        </authorList>
    </citation>
    <scope>FUNCTION</scope>
    <scope>CATALYTIC ACTIVITY</scope>
    <source>
        <strain>cv. Cabernet Sauvignon</strain>
    </source>
</reference>
<reference evidence="12 13" key="5">
    <citation type="journal article" date="2009" name="Acta Crystallogr. D">
        <title>Structure and epimerase activity of anthocyanidin reductase from Vitis vinifera.</title>
        <authorList>
            <person name="Gargouri M."/>
            <person name="Manigand C."/>
            <person name="Mauge C."/>
            <person name="Granier T."/>
            <person name="Langlois d'Estaintot B."/>
            <person name="Cala O."/>
            <person name="Pianet I."/>
            <person name="Bathany K."/>
            <person name="Chaudiere J."/>
            <person name="Gallois B."/>
        </authorList>
    </citation>
    <scope>X-RAY CRYSTALLOGRAPHY (2.22 ANGSTROMS)</scope>
    <scope>FUNCTION</scope>
    <scope>ACTIVITY REGULATION</scope>
    <source>
        <strain>cv. Cabernet Sauvignon</strain>
    </source>
</reference>
<name>ANRCS_VITVI</name>
<evidence type="ECO:0000250" key="1">
    <source>
        <dbReference type="UniProtKB" id="A0A059TC02"/>
    </source>
</evidence>
<evidence type="ECO:0000250" key="2">
    <source>
        <dbReference type="UniProtKB" id="P93799"/>
    </source>
</evidence>
<evidence type="ECO:0000269" key="3">
    <source>
    </source>
</evidence>
<evidence type="ECO:0000269" key="4">
    <source>
    </source>
</evidence>
<evidence type="ECO:0000269" key="5">
    <source>
    </source>
</evidence>
<evidence type="ECO:0000269" key="6">
    <source>
    </source>
</evidence>
<evidence type="ECO:0000269" key="7">
    <source ref="1"/>
</evidence>
<evidence type="ECO:0000303" key="8">
    <source ref="1"/>
</evidence>
<evidence type="ECO:0000305" key="9"/>
<evidence type="ECO:0000305" key="10">
    <source>
    </source>
</evidence>
<evidence type="ECO:0000312" key="11">
    <source>
        <dbReference type="EMBL" id="BAD89742.1"/>
    </source>
</evidence>
<evidence type="ECO:0007744" key="12">
    <source>
        <dbReference type="PDB" id="2RH8"/>
    </source>
</evidence>
<evidence type="ECO:0007744" key="13">
    <source>
        <dbReference type="PDB" id="3HFS"/>
    </source>
</evidence>
<evidence type="ECO:0007829" key="14">
    <source>
        <dbReference type="PDB" id="2RH8"/>
    </source>
</evidence>
<proteinExistence type="evidence at protein level"/>
<protein>
    <recommendedName>
        <fullName evidence="8">Anthocyanidin reductase ((2S)-flavan-3-ol-forming)</fullName>
        <shortName evidence="8">VvANR</shortName>
        <ecNumber evidence="6 7">1.3.1.112</ecNumber>
    </recommendedName>
</protein>
<feature type="chain" id="PRO_0000438271" description="Anthocyanidin reductase ((2S)-flavan-3-ol-forming)">
    <location>
        <begin position="1"/>
        <end position="338"/>
    </location>
</feature>
<feature type="binding site" evidence="2">
    <location>
        <begin position="18"/>
        <end position="21"/>
    </location>
    <ligand>
        <name>NADP(+)</name>
        <dbReference type="ChEBI" id="CHEBI:58349"/>
    </ligand>
</feature>
<feature type="binding site" evidence="1">
    <location>
        <position position="48"/>
    </location>
    <ligand>
        <name>NADP(+)</name>
        <dbReference type="ChEBI" id="CHEBI:58349"/>
    </ligand>
</feature>
<feature type="binding site" evidence="2">
    <location>
        <begin position="87"/>
        <end position="90"/>
    </location>
    <ligand>
        <name>NADP(+)</name>
        <dbReference type="ChEBI" id="CHEBI:58349"/>
    </ligand>
</feature>
<feature type="binding site" evidence="1">
    <location>
        <position position="168"/>
    </location>
    <ligand>
        <name>NADP(+)</name>
        <dbReference type="ChEBI" id="CHEBI:58349"/>
    </ligand>
</feature>
<feature type="strand" evidence="14">
    <location>
        <begin position="11"/>
        <end position="15"/>
    </location>
</feature>
<feature type="helix" evidence="14">
    <location>
        <begin position="20"/>
        <end position="31"/>
    </location>
</feature>
<feature type="strand" evidence="14">
    <location>
        <begin position="35"/>
        <end position="41"/>
    </location>
</feature>
<feature type="turn" evidence="14">
    <location>
        <begin position="46"/>
        <end position="49"/>
    </location>
</feature>
<feature type="helix" evidence="14">
    <location>
        <begin position="50"/>
        <end position="55"/>
    </location>
</feature>
<feature type="helix" evidence="14">
    <location>
        <begin position="56"/>
        <end position="58"/>
    </location>
</feature>
<feature type="strand" evidence="14">
    <location>
        <begin position="61"/>
        <end position="65"/>
    </location>
</feature>
<feature type="turn" evidence="14">
    <location>
        <begin position="68"/>
        <end position="70"/>
    </location>
</feature>
<feature type="strand" evidence="14">
    <location>
        <begin position="71"/>
        <end position="74"/>
    </location>
</feature>
<feature type="helix" evidence="14">
    <location>
        <begin position="75"/>
        <end position="78"/>
    </location>
</feature>
<feature type="strand" evidence="14">
    <location>
        <begin position="82"/>
        <end position="89"/>
    </location>
</feature>
<feature type="helix" evidence="14">
    <location>
        <begin position="104"/>
        <end position="119"/>
    </location>
</feature>
<feature type="strand" evidence="14">
    <location>
        <begin position="125"/>
        <end position="129"/>
    </location>
</feature>
<feature type="helix" evidence="14">
    <location>
        <begin position="132"/>
        <end position="140"/>
    </location>
</feature>
<feature type="turn" evidence="14">
    <location>
        <begin position="149"/>
        <end position="153"/>
    </location>
</feature>
<feature type="helix" evidence="14">
    <location>
        <begin position="174"/>
        <end position="186"/>
    </location>
</feature>
<feature type="strand" evidence="14">
    <location>
        <begin position="190"/>
        <end position="195"/>
    </location>
</feature>
<feature type="strand" evidence="14">
    <location>
        <begin position="197"/>
        <end position="200"/>
    </location>
</feature>
<feature type="strand" evidence="14">
    <location>
        <begin position="203"/>
        <end position="206"/>
    </location>
</feature>
<feature type="helix" evidence="14">
    <location>
        <begin position="209"/>
        <end position="219"/>
    </location>
</feature>
<feature type="helix" evidence="14">
    <location>
        <begin position="222"/>
        <end position="235"/>
    </location>
</feature>
<feature type="strand" evidence="14">
    <location>
        <begin position="236"/>
        <end position="242"/>
    </location>
</feature>
<feature type="helix" evidence="14">
    <location>
        <begin position="243"/>
        <end position="255"/>
    </location>
</feature>
<feature type="strand" evidence="14">
    <location>
        <begin position="261"/>
        <end position="265"/>
    </location>
</feature>
<feature type="strand" evidence="14">
    <location>
        <begin position="267"/>
        <end position="270"/>
    </location>
</feature>
<feature type="helix" evidence="14">
    <location>
        <begin position="272"/>
        <end position="282"/>
    </location>
</feature>
<feature type="helix" evidence="14">
    <location>
        <begin position="306"/>
        <end position="311"/>
    </location>
</feature>
<feature type="helix" evidence="14">
    <location>
        <begin position="319"/>
        <end position="332"/>
    </location>
</feature>